<organism>
    <name type="scientific">Salmonella dublin (strain CT_02021853)</name>
    <dbReference type="NCBI Taxonomy" id="439851"/>
    <lineage>
        <taxon>Bacteria</taxon>
        <taxon>Pseudomonadati</taxon>
        <taxon>Pseudomonadota</taxon>
        <taxon>Gammaproteobacteria</taxon>
        <taxon>Enterobacterales</taxon>
        <taxon>Enterobacteriaceae</taxon>
        <taxon>Salmonella</taxon>
    </lineage>
</organism>
<name>PRIB_SALDC</name>
<evidence type="ECO:0000255" key="1">
    <source>
        <dbReference type="HAMAP-Rule" id="MF_00720"/>
    </source>
</evidence>
<protein>
    <recommendedName>
        <fullName evidence="1">Replication restart protein PriB</fullName>
    </recommendedName>
</protein>
<gene>
    <name evidence="1" type="primary">priB</name>
    <name type="ordered locus">SeD_A4788</name>
</gene>
<keyword id="KW-0235">DNA replication</keyword>
<keyword id="KW-0238">DNA-binding</keyword>
<keyword id="KW-0639">Primosome</keyword>
<dbReference type="EMBL" id="CP001144">
    <property type="protein sequence ID" value="ACH73906.1"/>
    <property type="molecule type" value="Genomic_DNA"/>
</dbReference>
<dbReference type="RefSeq" id="WP_001519453.1">
    <property type="nucleotide sequence ID" value="NC_011205.1"/>
</dbReference>
<dbReference type="SMR" id="B5FSA2"/>
<dbReference type="GeneID" id="66758616"/>
<dbReference type="KEGG" id="sed:SeD_A4788"/>
<dbReference type="HOGENOM" id="CLU_166075_0_0_6"/>
<dbReference type="Proteomes" id="UP000008322">
    <property type="component" value="Chromosome"/>
</dbReference>
<dbReference type="GO" id="GO:1990077">
    <property type="term" value="C:primosome complex"/>
    <property type="evidence" value="ECO:0007669"/>
    <property type="project" value="UniProtKB-KW"/>
</dbReference>
<dbReference type="GO" id="GO:0003697">
    <property type="term" value="F:single-stranded DNA binding"/>
    <property type="evidence" value="ECO:0007669"/>
    <property type="project" value="UniProtKB-UniRule"/>
</dbReference>
<dbReference type="GO" id="GO:0006269">
    <property type="term" value="P:DNA replication, synthesis of primer"/>
    <property type="evidence" value="ECO:0007669"/>
    <property type="project" value="UniProtKB-KW"/>
</dbReference>
<dbReference type="CDD" id="cd04496">
    <property type="entry name" value="SSB_OBF"/>
    <property type="match status" value="1"/>
</dbReference>
<dbReference type="FunFam" id="2.40.50.140:FF:000077">
    <property type="entry name" value="Primosomal replication protein N"/>
    <property type="match status" value="1"/>
</dbReference>
<dbReference type="Gene3D" id="2.40.50.140">
    <property type="entry name" value="Nucleic acid-binding proteins"/>
    <property type="match status" value="1"/>
</dbReference>
<dbReference type="HAMAP" id="MF_00720">
    <property type="entry name" value="PriB"/>
    <property type="match status" value="1"/>
</dbReference>
<dbReference type="InterPro" id="IPR012340">
    <property type="entry name" value="NA-bd_OB-fold"/>
</dbReference>
<dbReference type="InterPro" id="IPR000424">
    <property type="entry name" value="Primosome_PriB/ssb"/>
</dbReference>
<dbReference type="InterPro" id="IPR023646">
    <property type="entry name" value="Prisomal_replication_PriB"/>
</dbReference>
<dbReference type="NCBIfam" id="TIGR04418">
    <property type="entry name" value="PriB_gamma"/>
    <property type="match status" value="1"/>
</dbReference>
<dbReference type="Pfam" id="PF22657">
    <property type="entry name" value="SSB_1"/>
    <property type="match status" value="1"/>
</dbReference>
<dbReference type="PIRSF" id="PIRSF003135">
    <property type="entry name" value="Primosomal_n"/>
    <property type="match status" value="1"/>
</dbReference>
<dbReference type="SUPFAM" id="SSF50249">
    <property type="entry name" value="Nucleic acid-binding proteins"/>
    <property type="match status" value="1"/>
</dbReference>
<dbReference type="PROSITE" id="PS50935">
    <property type="entry name" value="SSB"/>
    <property type="match status" value="1"/>
</dbReference>
<proteinExistence type="inferred from homology"/>
<accession>B5FSA2</accession>
<feature type="chain" id="PRO_1000132627" description="Replication restart protein PriB">
    <location>
        <begin position="1"/>
        <end position="104"/>
    </location>
</feature>
<feature type="domain" description="SSB" evidence="1">
    <location>
        <begin position="1"/>
        <end position="101"/>
    </location>
</feature>
<sequence>MTNRLALSGTVCRAPLRKVSPSGIPHCQFVLEHRSVQEEAGFHRQAWCQMPVIVSGHENQAITHSITVGSRITVQGFISCHKAKNGLSKMVLHAEQIELIDSGD</sequence>
<reference key="1">
    <citation type="journal article" date="2011" name="J. Bacteriol.">
        <title>Comparative genomics of 28 Salmonella enterica isolates: evidence for CRISPR-mediated adaptive sublineage evolution.</title>
        <authorList>
            <person name="Fricke W.F."/>
            <person name="Mammel M.K."/>
            <person name="McDermott P.F."/>
            <person name="Tartera C."/>
            <person name="White D.G."/>
            <person name="Leclerc J.E."/>
            <person name="Ravel J."/>
            <person name="Cebula T.A."/>
        </authorList>
    </citation>
    <scope>NUCLEOTIDE SEQUENCE [LARGE SCALE GENOMIC DNA]</scope>
    <source>
        <strain>CT_02021853</strain>
    </source>
</reference>
<comment type="function">
    <text evidence="1">Involved in the restart of stalled replication forks, which reloads the replicative helicase on sites other than the origin of replication; the PriA-PriB pathway is the major replication restart pathway. During primosome assembly it facilitates complex formation between PriA and DnaT on DNA; stabilizes PriA on DNA. Stimulates the DNA unwinding activity of PriA helicase.</text>
</comment>
<comment type="subunit">
    <text evidence="1">Homodimer. Interacts with PriA and DnaT. Component of the replication restart primosome. Primosome assembly occurs via a 'hand-off' mechanism. PriA binds to replication forks, subsequently PriB then DnaT bind; DnaT then displaces ssDNA to generate the helicase loading substrate.</text>
</comment>
<comment type="similarity">
    <text evidence="1">Belongs to the PriB family.</text>
</comment>